<organism>
    <name type="scientific">Streptococcus pyogenes serotype M4 (strain MGAS10750)</name>
    <dbReference type="NCBI Taxonomy" id="370554"/>
    <lineage>
        <taxon>Bacteria</taxon>
        <taxon>Bacillati</taxon>
        <taxon>Bacillota</taxon>
        <taxon>Bacilli</taxon>
        <taxon>Lactobacillales</taxon>
        <taxon>Streptococcaceae</taxon>
        <taxon>Streptococcus</taxon>
    </lineage>
</organism>
<accession>Q1J8I5</accession>
<gene>
    <name evidence="1" type="primary">rpsG</name>
    <name type="ordered locus">MGAS10750_Spy0226</name>
</gene>
<reference key="1">
    <citation type="journal article" date="2006" name="Proc. Natl. Acad. Sci. U.S.A.">
        <title>Molecular genetic anatomy of inter- and intraserotype variation in the human bacterial pathogen group A Streptococcus.</title>
        <authorList>
            <person name="Beres S.B."/>
            <person name="Richter E.W."/>
            <person name="Nagiec M.J."/>
            <person name="Sumby P."/>
            <person name="Porcella S.F."/>
            <person name="DeLeo F.R."/>
            <person name="Musser J.M."/>
        </authorList>
    </citation>
    <scope>NUCLEOTIDE SEQUENCE [LARGE SCALE GENOMIC DNA]</scope>
    <source>
        <strain>MGAS10750</strain>
    </source>
</reference>
<dbReference type="EMBL" id="CP000262">
    <property type="protein sequence ID" value="ABF37176.1"/>
    <property type="molecule type" value="Genomic_DNA"/>
</dbReference>
<dbReference type="SMR" id="Q1J8I5"/>
<dbReference type="KEGG" id="spi:MGAS10750_Spy0226"/>
<dbReference type="HOGENOM" id="CLU_072226_1_1_9"/>
<dbReference type="Proteomes" id="UP000002434">
    <property type="component" value="Chromosome"/>
</dbReference>
<dbReference type="GO" id="GO:0015935">
    <property type="term" value="C:small ribosomal subunit"/>
    <property type="evidence" value="ECO:0007669"/>
    <property type="project" value="InterPro"/>
</dbReference>
<dbReference type="GO" id="GO:0019843">
    <property type="term" value="F:rRNA binding"/>
    <property type="evidence" value="ECO:0007669"/>
    <property type="project" value="UniProtKB-UniRule"/>
</dbReference>
<dbReference type="GO" id="GO:0003735">
    <property type="term" value="F:structural constituent of ribosome"/>
    <property type="evidence" value="ECO:0007669"/>
    <property type="project" value="InterPro"/>
</dbReference>
<dbReference type="GO" id="GO:0000049">
    <property type="term" value="F:tRNA binding"/>
    <property type="evidence" value="ECO:0007669"/>
    <property type="project" value="UniProtKB-UniRule"/>
</dbReference>
<dbReference type="GO" id="GO:0006412">
    <property type="term" value="P:translation"/>
    <property type="evidence" value="ECO:0007669"/>
    <property type="project" value="UniProtKB-UniRule"/>
</dbReference>
<dbReference type="CDD" id="cd14869">
    <property type="entry name" value="uS7_Bacteria"/>
    <property type="match status" value="1"/>
</dbReference>
<dbReference type="FunFam" id="1.10.455.10:FF:000001">
    <property type="entry name" value="30S ribosomal protein S7"/>
    <property type="match status" value="1"/>
</dbReference>
<dbReference type="Gene3D" id="1.10.455.10">
    <property type="entry name" value="Ribosomal protein S7 domain"/>
    <property type="match status" value="1"/>
</dbReference>
<dbReference type="HAMAP" id="MF_00480_B">
    <property type="entry name" value="Ribosomal_uS7_B"/>
    <property type="match status" value="1"/>
</dbReference>
<dbReference type="InterPro" id="IPR000235">
    <property type="entry name" value="Ribosomal_uS7"/>
</dbReference>
<dbReference type="InterPro" id="IPR005717">
    <property type="entry name" value="Ribosomal_uS7_bac/org-type"/>
</dbReference>
<dbReference type="InterPro" id="IPR020606">
    <property type="entry name" value="Ribosomal_uS7_CS"/>
</dbReference>
<dbReference type="InterPro" id="IPR023798">
    <property type="entry name" value="Ribosomal_uS7_dom"/>
</dbReference>
<dbReference type="InterPro" id="IPR036823">
    <property type="entry name" value="Ribosomal_uS7_dom_sf"/>
</dbReference>
<dbReference type="NCBIfam" id="TIGR01029">
    <property type="entry name" value="rpsG_bact"/>
    <property type="match status" value="1"/>
</dbReference>
<dbReference type="PANTHER" id="PTHR11205">
    <property type="entry name" value="RIBOSOMAL PROTEIN S7"/>
    <property type="match status" value="1"/>
</dbReference>
<dbReference type="Pfam" id="PF00177">
    <property type="entry name" value="Ribosomal_S7"/>
    <property type="match status" value="1"/>
</dbReference>
<dbReference type="PIRSF" id="PIRSF002122">
    <property type="entry name" value="RPS7p_RPS7a_RPS5e_RPS7o"/>
    <property type="match status" value="1"/>
</dbReference>
<dbReference type="SUPFAM" id="SSF47973">
    <property type="entry name" value="Ribosomal protein S7"/>
    <property type="match status" value="1"/>
</dbReference>
<dbReference type="PROSITE" id="PS00052">
    <property type="entry name" value="RIBOSOMAL_S7"/>
    <property type="match status" value="1"/>
</dbReference>
<evidence type="ECO:0000255" key="1">
    <source>
        <dbReference type="HAMAP-Rule" id="MF_00480"/>
    </source>
</evidence>
<evidence type="ECO:0000305" key="2"/>
<proteinExistence type="inferred from homology"/>
<name>RS7_STRPF</name>
<keyword id="KW-0687">Ribonucleoprotein</keyword>
<keyword id="KW-0689">Ribosomal protein</keyword>
<keyword id="KW-0694">RNA-binding</keyword>
<keyword id="KW-0699">rRNA-binding</keyword>
<keyword id="KW-0820">tRNA-binding</keyword>
<protein>
    <recommendedName>
        <fullName evidence="1">Small ribosomal subunit protein uS7</fullName>
    </recommendedName>
    <alternativeName>
        <fullName evidence="2">30S ribosomal protein S7</fullName>
    </alternativeName>
</protein>
<sequence length="156" mass="17652">MSRKNQAPKREVLPDPLYNSKIVTRLINRVMLDGKRGTAATIVYDAFSAIKEATGNDALEVFETAMDNIMPVLEVRARRVGGSNYQVPVEVRPERRTTLGLRWLVNASRARGEHTMKDRLAKEIMDAANNTGASVKKREDTHKMAEANRAFAHFRW</sequence>
<comment type="function">
    <text evidence="1">One of the primary rRNA binding proteins, it binds directly to 16S rRNA where it nucleates assembly of the head domain of the 30S subunit. Is located at the subunit interface close to the decoding center, probably blocks exit of the E-site tRNA.</text>
</comment>
<comment type="subunit">
    <text evidence="1">Part of the 30S ribosomal subunit. Contacts proteins S9 and S11.</text>
</comment>
<comment type="similarity">
    <text evidence="1">Belongs to the universal ribosomal protein uS7 family.</text>
</comment>
<feature type="chain" id="PRO_1000014302" description="Small ribosomal subunit protein uS7">
    <location>
        <begin position="1"/>
        <end position="156"/>
    </location>
</feature>